<accession>Q1I3U0</accession>
<feature type="chain" id="PRO_1000012649" description="ATP-dependent protease subunit HslV">
    <location>
        <begin position="1"/>
        <end position="176"/>
    </location>
</feature>
<feature type="active site" evidence="1">
    <location>
        <position position="2"/>
    </location>
</feature>
<feature type="binding site" evidence="1">
    <location>
        <position position="157"/>
    </location>
    <ligand>
        <name>Na(+)</name>
        <dbReference type="ChEBI" id="CHEBI:29101"/>
    </ligand>
</feature>
<feature type="binding site" evidence="1">
    <location>
        <position position="160"/>
    </location>
    <ligand>
        <name>Na(+)</name>
        <dbReference type="ChEBI" id="CHEBI:29101"/>
    </ligand>
</feature>
<feature type="binding site" evidence="1">
    <location>
        <position position="163"/>
    </location>
    <ligand>
        <name>Na(+)</name>
        <dbReference type="ChEBI" id="CHEBI:29101"/>
    </ligand>
</feature>
<dbReference type="EC" id="3.4.25.2" evidence="1"/>
<dbReference type="EMBL" id="CT573326">
    <property type="protein sequence ID" value="CAK17696.1"/>
    <property type="molecule type" value="Genomic_DNA"/>
</dbReference>
<dbReference type="RefSeq" id="WP_011536056.1">
    <property type="nucleotide sequence ID" value="NC_008027.1"/>
</dbReference>
<dbReference type="SMR" id="Q1I3U0"/>
<dbReference type="STRING" id="384676.PSEEN5063"/>
<dbReference type="MEROPS" id="T01.007"/>
<dbReference type="GeneID" id="93680111"/>
<dbReference type="KEGG" id="pen:PSEEN5063"/>
<dbReference type="eggNOG" id="COG5405">
    <property type="taxonomic scope" value="Bacteria"/>
</dbReference>
<dbReference type="HOGENOM" id="CLU_093872_1_0_6"/>
<dbReference type="OrthoDB" id="9804884at2"/>
<dbReference type="Proteomes" id="UP000000658">
    <property type="component" value="Chromosome"/>
</dbReference>
<dbReference type="GO" id="GO:0009376">
    <property type="term" value="C:HslUV protease complex"/>
    <property type="evidence" value="ECO:0007669"/>
    <property type="project" value="UniProtKB-UniRule"/>
</dbReference>
<dbReference type="GO" id="GO:0005839">
    <property type="term" value="C:proteasome core complex"/>
    <property type="evidence" value="ECO:0007669"/>
    <property type="project" value="InterPro"/>
</dbReference>
<dbReference type="GO" id="GO:0046872">
    <property type="term" value="F:metal ion binding"/>
    <property type="evidence" value="ECO:0007669"/>
    <property type="project" value="UniProtKB-KW"/>
</dbReference>
<dbReference type="GO" id="GO:0004298">
    <property type="term" value="F:threonine-type endopeptidase activity"/>
    <property type="evidence" value="ECO:0007669"/>
    <property type="project" value="UniProtKB-KW"/>
</dbReference>
<dbReference type="GO" id="GO:0051603">
    <property type="term" value="P:proteolysis involved in protein catabolic process"/>
    <property type="evidence" value="ECO:0007669"/>
    <property type="project" value="InterPro"/>
</dbReference>
<dbReference type="CDD" id="cd01913">
    <property type="entry name" value="protease_HslV"/>
    <property type="match status" value="1"/>
</dbReference>
<dbReference type="FunFam" id="3.60.20.10:FF:000002">
    <property type="entry name" value="ATP-dependent protease subunit HslV"/>
    <property type="match status" value="1"/>
</dbReference>
<dbReference type="Gene3D" id="3.60.20.10">
    <property type="entry name" value="Glutamine Phosphoribosylpyrophosphate, subunit 1, domain 1"/>
    <property type="match status" value="1"/>
</dbReference>
<dbReference type="HAMAP" id="MF_00248">
    <property type="entry name" value="HslV"/>
    <property type="match status" value="1"/>
</dbReference>
<dbReference type="InterPro" id="IPR022281">
    <property type="entry name" value="ATP-dep_Prtase_HsIV_su"/>
</dbReference>
<dbReference type="InterPro" id="IPR029055">
    <property type="entry name" value="Ntn_hydrolases_N"/>
</dbReference>
<dbReference type="InterPro" id="IPR001353">
    <property type="entry name" value="Proteasome_sua/b"/>
</dbReference>
<dbReference type="InterPro" id="IPR023333">
    <property type="entry name" value="Proteasome_suB-type"/>
</dbReference>
<dbReference type="NCBIfam" id="TIGR03692">
    <property type="entry name" value="ATP_dep_HslV"/>
    <property type="match status" value="1"/>
</dbReference>
<dbReference type="NCBIfam" id="NF003964">
    <property type="entry name" value="PRK05456.1"/>
    <property type="match status" value="1"/>
</dbReference>
<dbReference type="PANTHER" id="PTHR32194:SF0">
    <property type="entry name" value="ATP-DEPENDENT PROTEASE SUBUNIT HSLV"/>
    <property type="match status" value="1"/>
</dbReference>
<dbReference type="PANTHER" id="PTHR32194">
    <property type="entry name" value="METALLOPROTEASE TLDD"/>
    <property type="match status" value="1"/>
</dbReference>
<dbReference type="Pfam" id="PF00227">
    <property type="entry name" value="Proteasome"/>
    <property type="match status" value="1"/>
</dbReference>
<dbReference type="PIRSF" id="PIRSF039093">
    <property type="entry name" value="HslV"/>
    <property type="match status" value="1"/>
</dbReference>
<dbReference type="SUPFAM" id="SSF56235">
    <property type="entry name" value="N-terminal nucleophile aminohydrolases (Ntn hydrolases)"/>
    <property type="match status" value="1"/>
</dbReference>
<dbReference type="PROSITE" id="PS51476">
    <property type="entry name" value="PROTEASOME_BETA_2"/>
    <property type="match status" value="1"/>
</dbReference>
<protein>
    <recommendedName>
        <fullName evidence="1">ATP-dependent protease subunit HslV</fullName>
        <ecNumber evidence="1">3.4.25.2</ecNumber>
    </recommendedName>
</protein>
<organism>
    <name type="scientific">Pseudomonas entomophila (strain L48)</name>
    <dbReference type="NCBI Taxonomy" id="384676"/>
    <lineage>
        <taxon>Bacteria</taxon>
        <taxon>Pseudomonadati</taxon>
        <taxon>Pseudomonadota</taxon>
        <taxon>Gammaproteobacteria</taxon>
        <taxon>Pseudomonadales</taxon>
        <taxon>Pseudomonadaceae</taxon>
        <taxon>Pseudomonas</taxon>
    </lineage>
</organism>
<sequence length="176" mass="18715">MTTIVSVRRNGKVVMGGDGQVSLGNTVMKGNAKKVRRLYNGQVIAGFAGATADAFTLFERFEAQLQKHSGHLVRAAVELAKEWRTDRSLSRLEAMLAVANKDASLIITGNGDVVEPEDGLIAMGSGGGYAQAAARALLNKTDLSAREITEAALNIAGDICVFTNHNLTIEEQDLAE</sequence>
<evidence type="ECO:0000255" key="1">
    <source>
        <dbReference type="HAMAP-Rule" id="MF_00248"/>
    </source>
</evidence>
<gene>
    <name evidence="1" type="primary">hslV</name>
    <name type="ordered locus">PSEEN5063</name>
</gene>
<keyword id="KW-0021">Allosteric enzyme</keyword>
<keyword id="KW-0963">Cytoplasm</keyword>
<keyword id="KW-0378">Hydrolase</keyword>
<keyword id="KW-0479">Metal-binding</keyword>
<keyword id="KW-0645">Protease</keyword>
<keyword id="KW-0915">Sodium</keyword>
<keyword id="KW-0888">Threonine protease</keyword>
<proteinExistence type="inferred from homology"/>
<comment type="function">
    <text evidence="1">Protease subunit of a proteasome-like degradation complex believed to be a general protein degrading machinery.</text>
</comment>
<comment type="catalytic activity">
    <reaction evidence="1">
        <text>ATP-dependent cleavage of peptide bonds with broad specificity.</text>
        <dbReference type="EC" id="3.4.25.2"/>
    </reaction>
</comment>
<comment type="activity regulation">
    <text evidence="1">Allosterically activated by HslU binding.</text>
</comment>
<comment type="subunit">
    <text evidence="1">A double ring-shaped homohexamer of HslV is capped on each side by a ring-shaped HslU homohexamer. The assembly of the HslU/HslV complex is dependent on binding of ATP.</text>
</comment>
<comment type="subcellular location">
    <subcellularLocation>
        <location evidence="1">Cytoplasm</location>
    </subcellularLocation>
</comment>
<comment type="similarity">
    <text evidence="1">Belongs to the peptidase T1B family. HslV subfamily.</text>
</comment>
<name>HSLV_PSEE4</name>
<reference key="1">
    <citation type="journal article" date="2006" name="Nat. Biotechnol.">
        <title>Complete genome sequence of the entomopathogenic and metabolically versatile soil bacterium Pseudomonas entomophila.</title>
        <authorList>
            <person name="Vodovar N."/>
            <person name="Vallenet D."/>
            <person name="Cruveiller S."/>
            <person name="Rouy Z."/>
            <person name="Barbe V."/>
            <person name="Acosta C."/>
            <person name="Cattolico L."/>
            <person name="Jubin C."/>
            <person name="Lajus A."/>
            <person name="Segurens B."/>
            <person name="Vacherie B."/>
            <person name="Wincker P."/>
            <person name="Weissenbach J."/>
            <person name="Lemaitre B."/>
            <person name="Medigue C."/>
            <person name="Boccard F."/>
        </authorList>
    </citation>
    <scope>NUCLEOTIDE SEQUENCE [LARGE SCALE GENOMIC DNA]</scope>
    <source>
        <strain>L48</strain>
    </source>
</reference>